<dbReference type="EMBL" id="AL590842">
    <property type="protein sequence ID" value="CAL20415.1"/>
    <property type="molecule type" value="Genomic_DNA"/>
</dbReference>
<dbReference type="EMBL" id="AE009952">
    <property type="protein sequence ID" value="AAM86090.1"/>
    <property type="molecule type" value="Genomic_DNA"/>
</dbReference>
<dbReference type="EMBL" id="AE017042">
    <property type="protein sequence ID" value="AAS61852.1"/>
    <property type="molecule type" value="Genomic_DNA"/>
</dbReference>
<dbReference type="PIR" id="AD0216">
    <property type="entry name" value="AD0216"/>
</dbReference>
<dbReference type="RefSeq" id="WP_002211082.1">
    <property type="nucleotide sequence ID" value="NZ_WUCM01000019.1"/>
</dbReference>
<dbReference type="RefSeq" id="YP_002346771.1">
    <property type="nucleotide sequence ID" value="NC_003143.1"/>
</dbReference>
<dbReference type="SMR" id="Q8ZFE0"/>
<dbReference type="STRING" id="214092.YPO1774"/>
<dbReference type="PaxDb" id="214092-YPO1774"/>
<dbReference type="DNASU" id="1147481"/>
<dbReference type="EnsemblBacteria" id="AAS61852">
    <property type="protein sequence ID" value="AAS61852"/>
    <property type="gene ID" value="YP_1619"/>
</dbReference>
<dbReference type="KEGG" id="ype:YPO1774"/>
<dbReference type="KEGG" id="ypk:y2534"/>
<dbReference type="KEGG" id="ypm:YP_1619"/>
<dbReference type="PATRIC" id="fig|214092.21.peg.2132"/>
<dbReference type="eggNOG" id="COG3140">
    <property type="taxonomic scope" value="Bacteria"/>
</dbReference>
<dbReference type="HOGENOM" id="CLU_185263_0_0_6"/>
<dbReference type="OMA" id="QNHQGAR"/>
<dbReference type="OrthoDB" id="6522084at2"/>
<dbReference type="Proteomes" id="UP000000815">
    <property type="component" value="Chromosome"/>
</dbReference>
<dbReference type="Proteomes" id="UP000001019">
    <property type="component" value="Chromosome"/>
</dbReference>
<dbReference type="Proteomes" id="UP000002490">
    <property type="component" value="Chromosome"/>
</dbReference>
<dbReference type="HAMAP" id="MF_00507">
    <property type="entry name" value="UPF0181"/>
    <property type="match status" value="1"/>
</dbReference>
<dbReference type="InterPro" id="IPR005371">
    <property type="entry name" value="UPF0181"/>
</dbReference>
<dbReference type="NCBIfam" id="NF003476">
    <property type="entry name" value="PRK05114.1"/>
    <property type="match status" value="1"/>
</dbReference>
<dbReference type="Pfam" id="PF03701">
    <property type="entry name" value="UPF0181"/>
    <property type="match status" value="1"/>
</dbReference>
<accession>Q8ZFE0</accession>
<accession>Q0WG17</accession>
<sequence>MLAGMPSLSHEEQQEAVERIHKFMSEGMSSGEAIALVAAEIRERHQNDPQAMAIFEDHDFDEHTESDYRRDDEPDADDIEDPYEG</sequence>
<comment type="similarity">
    <text evidence="1">Belongs to the UPF0181 family.</text>
</comment>
<feature type="chain" id="PRO_0000216207" description="UPF0181 protein YPO1774/y2534/YP_1619">
    <location>
        <begin position="1"/>
        <end position="85"/>
    </location>
</feature>
<feature type="region of interest" description="Disordered" evidence="2">
    <location>
        <begin position="50"/>
        <end position="85"/>
    </location>
</feature>
<feature type="compositionally biased region" description="Basic and acidic residues" evidence="2">
    <location>
        <begin position="55"/>
        <end position="72"/>
    </location>
</feature>
<feature type="compositionally biased region" description="Acidic residues" evidence="2">
    <location>
        <begin position="73"/>
        <end position="85"/>
    </location>
</feature>
<proteinExistence type="inferred from homology"/>
<name>Y1774_YERPE</name>
<keyword id="KW-1185">Reference proteome</keyword>
<reference key="1">
    <citation type="journal article" date="2001" name="Nature">
        <title>Genome sequence of Yersinia pestis, the causative agent of plague.</title>
        <authorList>
            <person name="Parkhill J."/>
            <person name="Wren B.W."/>
            <person name="Thomson N.R."/>
            <person name="Titball R.W."/>
            <person name="Holden M.T.G."/>
            <person name="Prentice M.B."/>
            <person name="Sebaihia M."/>
            <person name="James K.D."/>
            <person name="Churcher C.M."/>
            <person name="Mungall K.L."/>
            <person name="Baker S."/>
            <person name="Basham D."/>
            <person name="Bentley S.D."/>
            <person name="Brooks K."/>
            <person name="Cerdeno-Tarraga A.-M."/>
            <person name="Chillingworth T."/>
            <person name="Cronin A."/>
            <person name="Davies R.M."/>
            <person name="Davis P."/>
            <person name="Dougan G."/>
            <person name="Feltwell T."/>
            <person name="Hamlin N."/>
            <person name="Holroyd S."/>
            <person name="Jagels K."/>
            <person name="Karlyshev A.V."/>
            <person name="Leather S."/>
            <person name="Moule S."/>
            <person name="Oyston P.C.F."/>
            <person name="Quail M.A."/>
            <person name="Rutherford K.M."/>
            <person name="Simmonds M."/>
            <person name="Skelton J."/>
            <person name="Stevens K."/>
            <person name="Whitehead S."/>
            <person name="Barrell B.G."/>
        </authorList>
    </citation>
    <scope>NUCLEOTIDE SEQUENCE [LARGE SCALE GENOMIC DNA]</scope>
    <source>
        <strain>CO-92 / Biovar Orientalis</strain>
    </source>
</reference>
<reference key="2">
    <citation type="journal article" date="2002" name="J. Bacteriol.">
        <title>Genome sequence of Yersinia pestis KIM.</title>
        <authorList>
            <person name="Deng W."/>
            <person name="Burland V."/>
            <person name="Plunkett G. III"/>
            <person name="Boutin A."/>
            <person name="Mayhew G.F."/>
            <person name="Liss P."/>
            <person name="Perna N.T."/>
            <person name="Rose D.J."/>
            <person name="Mau B."/>
            <person name="Zhou S."/>
            <person name="Schwartz D.C."/>
            <person name="Fetherston J.D."/>
            <person name="Lindler L.E."/>
            <person name="Brubaker R.R."/>
            <person name="Plano G.V."/>
            <person name="Straley S.C."/>
            <person name="McDonough K.A."/>
            <person name="Nilles M.L."/>
            <person name="Matson J.S."/>
            <person name="Blattner F.R."/>
            <person name="Perry R.D."/>
        </authorList>
    </citation>
    <scope>NUCLEOTIDE SEQUENCE [LARGE SCALE GENOMIC DNA]</scope>
    <source>
        <strain>KIM10+ / Biovar Mediaevalis</strain>
    </source>
</reference>
<reference key="3">
    <citation type="journal article" date="2004" name="DNA Res.">
        <title>Complete genome sequence of Yersinia pestis strain 91001, an isolate avirulent to humans.</title>
        <authorList>
            <person name="Song Y."/>
            <person name="Tong Z."/>
            <person name="Wang J."/>
            <person name="Wang L."/>
            <person name="Guo Z."/>
            <person name="Han Y."/>
            <person name="Zhang J."/>
            <person name="Pei D."/>
            <person name="Zhou D."/>
            <person name="Qin H."/>
            <person name="Pang X."/>
            <person name="Han Y."/>
            <person name="Zhai J."/>
            <person name="Li M."/>
            <person name="Cui B."/>
            <person name="Qi Z."/>
            <person name="Jin L."/>
            <person name="Dai R."/>
            <person name="Chen F."/>
            <person name="Li S."/>
            <person name="Ye C."/>
            <person name="Du Z."/>
            <person name="Lin W."/>
            <person name="Wang J."/>
            <person name="Yu J."/>
            <person name="Yang H."/>
            <person name="Wang J."/>
            <person name="Huang P."/>
            <person name="Yang R."/>
        </authorList>
    </citation>
    <scope>NUCLEOTIDE SEQUENCE [LARGE SCALE GENOMIC DNA]</scope>
    <source>
        <strain>91001 / Biovar Mediaevalis</strain>
    </source>
</reference>
<organism>
    <name type="scientific">Yersinia pestis</name>
    <dbReference type="NCBI Taxonomy" id="632"/>
    <lineage>
        <taxon>Bacteria</taxon>
        <taxon>Pseudomonadati</taxon>
        <taxon>Pseudomonadota</taxon>
        <taxon>Gammaproteobacteria</taxon>
        <taxon>Enterobacterales</taxon>
        <taxon>Yersiniaceae</taxon>
        <taxon>Yersinia</taxon>
    </lineage>
</organism>
<gene>
    <name type="ordered locus">YPO1774</name>
    <name type="ordered locus">y2534</name>
    <name type="ordered locus">YP_1619</name>
</gene>
<protein>
    <recommendedName>
        <fullName evidence="1">UPF0181 protein YPO1774/y2534/YP_1619</fullName>
    </recommendedName>
</protein>
<evidence type="ECO:0000255" key="1">
    <source>
        <dbReference type="HAMAP-Rule" id="MF_00507"/>
    </source>
</evidence>
<evidence type="ECO:0000256" key="2">
    <source>
        <dbReference type="SAM" id="MobiDB-lite"/>
    </source>
</evidence>